<accession>Q87BZ2</accession>
<proteinExistence type="inferred from homology"/>
<comment type="function">
    <text evidence="1">Key enzyme in the regulation of glycerol uptake and metabolism. Catalyzes the phosphorylation of glycerol to yield sn-glycerol 3-phosphate.</text>
</comment>
<comment type="catalytic activity">
    <reaction evidence="1">
        <text>glycerol + ATP = sn-glycerol 3-phosphate + ADP + H(+)</text>
        <dbReference type="Rhea" id="RHEA:21644"/>
        <dbReference type="ChEBI" id="CHEBI:15378"/>
        <dbReference type="ChEBI" id="CHEBI:17754"/>
        <dbReference type="ChEBI" id="CHEBI:30616"/>
        <dbReference type="ChEBI" id="CHEBI:57597"/>
        <dbReference type="ChEBI" id="CHEBI:456216"/>
        <dbReference type="EC" id="2.7.1.30"/>
    </reaction>
</comment>
<comment type="activity regulation">
    <text evidence="1">Inhibited by fructose 1,6-bisphosphate (FBP).</text>
</comment>
<comment type="pathway">
    <text evidence="1">Polyol metabolism; glycerol degradation via glycerol kinase pathway; sn-glycerol 3-phosphate from glycerol: step 1/1.</text>
</comment>
<comment type="similarity">
    <text evidence="1">Belongs to the FGGY kinase family.</text>
</comment>
<name>GLPK_XYLFT</name>
<gene>
    <name evidence="1" type="primary">glpK</name>
    <name type="ordered locus">PD_1304</name>
</gene>
<reference key="1">
    <citation type="journal article" date="2003" name="J. Bacteriol.">
        <title>Comparative analyses of the complete genome sequences of Pierce's disease and citrus variegated chlorosis strains of Xylella fastidiosa.</title>
        <authorList>
            <person name="Van Sluys M.A."/>
            <person name="de Oliveira M.C."/>
            <person name="Monteiro-Vitorello C.B."/>
            <person name="Miyaki C.Y."/>
            <person name="Furlan L.R."/>
            <person name="Camargo L.E.A."/>
            <person name="da Silva A.C.R."/>
            <person name="Moon D.H."/>
            <person name="Takita M.A."/>
            <person name="Lemos E.G.M."/>
            <person name="Machado M.A."/>
            <person name="Ferro M.I.T."/>
            <person name="da Silva F.R."/>
            <person name="Goldman M.H.S."/>
            <person name="Goldman G.H."/>
            <person name="Lemos M.V.F."/>
            <person name="El-Dorry H."/>
            <person name="Tsai S.M."/>
            <person name="Carrer H."/>
            <person name="Carraro D.M."/>
            <person name="de Oliveira R.C."/>
            <person name="Nunes L.R."/>
            <person name="Siqueira W.J."/>
            <person name="Coutinho L.L."/>
            <person name="Kimura E.T."/>
            <person name="Ferro E.S."/>
            <person name="Harakava R."/>
            <person name="Kuramae E.E."/>
            <person name="Marino C.L."/>
            <person name="Giglioti E."/>
            <person name="Abreu I.L."/>
            <person name="Alves L.M.C."/>
            <person name="do Amaral A.M."/>
            <person name="Baia G.S."/>
            <person name="Blanco S.R."/>
            <person name="Brito M.S."/>
            <person name="Cannavan F.S."/>
            <person name="Celestino A.V."/>
            <person name="da Cunha A.F."/>
            <person name="Fenille R.C."/>
            <person name="Ferro J.A."/>
            <person name="Formighieri E.F."/>
            <person name="Kishi L.T."/>
            <person name="Leoni S.G."/>
            <person name="Oliveira A.R."/>
            <person name="Rosa V.E. Jr."/>
            <person name="Sassaki F.T."/>
            <person name="Sena J.A.D."/>
            <person name="de Souza A.A."/>
            <person name="Truffi D."/>
            <person name="Tsukumo F."/>
            <person name="Yanai G.M."/>
            <person name="Zaros L.G."/>
            <person name="Civerolo E.L."/>
            <person name="Simpson A.J.G."/>
            <person name="Almeida N.F. Jr."/>
            <person name="Setubal J.C."/>
            <person name="Kitajima J.P."/>
        </authorList>
    </citation>
    <scope>NUCLEOTIDE SEQUENCE [LARGE SCALE GENOMIC DNA]</scope>
    <source>
        <strain>Temecula1 / ATCC 700964</strain>
    </source>
</reference>
<keyword id="KW-0067">ATP-binding</keyword>
<keyword id="KW-0319">Glycerol metabolism</keyword>
<keyword id="KW-0418">Kinase</keyword>
<keyword id="KW-0547">Nucleotide-binding</keyword>
<keyword id="KW-1185">Reference proteome</keyword>
<keyword id="KW-0808">Transferase</keyword>
<feature type="chain" id="PRO_0000059525" description="Glycerol kinase">
    <location>
        <begin position="1"/>
        <end position="499"/>
    </location>
</feature>
<feature type="binding site" evidence="1">
    <location>
        <position position="13"/>
    </location>
    <ligand>
        <name>ADP</name>
        <dbReference type="ChEBI" id="CHEBI:456216"/>
    </ligand>
</feature>
<feature type="binding site" evidence="1">
    <location>
        <position position="13"/>
    </location>
    <ligand>
        <name>ATP</name>
        <dbReference type="ChEBI" id="CHEBI:30616"/>
    </ligand>
</feature>
<feature type="binding site" evidence="1">
    <location>
        <position position="13"/>
    </location>
    <ligand>
        <name>sn-glycerol 3-phosphate</name>
        <dbReference type="ChEBI" id="CHEBI:57597"/>
    </ligand>
</feature>
<feature type="binding site" evidence="1">
    <location>
        <position position="14"/>
    </location>
    <ligand>
        <name>ATP</name>
        <dbReference type="ChEBI" id="CHEBI:30616"/>
    </ligand>
</feature>
<feature type="binding site" evidence="1">
    <location>
        <position position="15"/>
    </location>
    <ligand>
        <name>ATP</name>
        <dbReference type="ChEBI" id="CHEBI:30616"/>
    </ligand>
</feature>
<feature type="binding site" evidence="1">
    <location>
        <position position="17"/>
    </location>
    <ligand>
        <name>ADP</name>
        <dbReference type="ChEBI" id="CHEBI:456216"/>
    </ligand>
</feature>
<feature type="binding site" evidence="1">
    <location>
        <position position="83"/>
    </location>
    <ligand>
        <name>glycerol</name>
        <dbReference type="ChEBI" id="CHEBI:17754"/>
    </ligand>
</feature>
<feature type="binding site" evidence="1">
    <location>
        <position position="83"/>
    </location>
    <ligand>
        <name>sn-glycerol 3-phosphate</name>
        <dbReference type="ChEBI" id="CHEBI:57597"/>
    </ligand>
</feature>
<feature type="binding site" evidence="1">
    <location>
        <position position="84"/>
    </location>
    <ligand>
        <name>glycerol</name>
        <dbReference type="ChEBI" id="CHEBI:17754"/>
    </ligand>
</feature>
<feature type="binding site" evidence="1">
    <location>
        <position position="84"/>
    </location>
    <ligand>
        <name>sn-glycerol 3-phosphate</name>
        <dbReference type="ChEBI" id="CHEBI:57597"/>
    </ligand>
</feature>
<feature type="binding site" evidence="1">
    <location>
        <position position="135"/>
    </location>
    <ligand>
        <name>glycerol</name>
        <dbReference type="ChEBI" id="CHEBI:17754"/>
    </ligand>
</feature>
<feature type="binding site" evidence="1">
    <location>
        <position position="135"/>
    </location>
    <ligand>
        <name>sn-glycerol 3-phosphate</name>
        <dbReference type="ChEBI" id="CHEBI:57597"/>
    </ligand>
</feature>
<feature type="binding site" evidence="1">
    <location>
        <position position="245"/>
    </location>
    <ligand>
        <name>glycerol</name>
        <dbReference type="ChEBI" id="CHEBI:17754"/>
    </ligand>
</feature>
<feature type="binding site" evidence="1">
    <location>
        <position position="245"/>
    </location>
    <ligand>
        <name>sn-glycerol 3-phosphate</name>
        <dbReference type="ChEBI" id="CHEBI:57597"/>
    </ligand>
</feature>
<feature type="binding site" evidence="1">
    <location>
        <position position="246"/>
    </location>
    <ligand>
        <name>glycerol</name>
        <dbReference type="ChEBI" id="CHEBI:17754"/>
    </ligand>
</feature>
<feature type="binding site" evidence="1">
    <location>
        <position position="267"/>
    </location>
    <ligand>
        <name>ADP</name>
        <dbReference type="ChEBI" id="CHEBI:456216"/>
    </ligand>
</feature>
<feature type="binding site" evidence="1">
    <location>
        <position position="267"/>
    </location>
    <ligand>
        <name>ATP</name>
        <dbReference type="ChEBI" id="CHEBI:30616"/>
    </ligand>
</feature>
<feature type="binding site" evidence="1">
    <location>
        <position position="310"/>
    </location>
    <ligand>
        <name>ADP</name>
        <dbReference type="ChEBI" id="CHEBI:456216"/>
    </ligand>
</feature>
<feature type="binding site" evidence="1">
    <location>
        <position position="310"/>
    </location>
    <ligand>
        <name>ATP</name>
        <dbReference type="ChEBI" id="CHEBI:30616"/>
    </ligand>
</feature>
<feature type="binding site" evidence="1">
    <location>
        <position position="314"/>
    </location>
    <ligand>
        <name>ATP</name>
        <dbReference type="ChEBI" id="CHEBI:30616"/>
    </ligand>
</feature>
<feature type="binding site" evidence="1">
    <location>
        <position position="411"/>
    </location>
    <ligand>
        <name>ADP</name>
        <dbReference type="ChEBI" id="CHEBI:456216"/>
    </ligand>
</feature>
<feature type="binding site" evidence="1">
    <location>
        <position position="411"/>
    </location>
    <ligand>
        <name>ATP</name>
        <dbReference type="ChEBI" id="CHEBI:30616"/>
    </ligand>
</feature>
<feature type="binding site" evidence="1">
    <location>
        <position position="415"/>
    </location>
    <ligand>
        <name>ADP</name>
        <dbReference type="ChEBI" id="CHEBI:456216"/>
    </ligand>
</feature>
<sequence length="499" mass="55343">MKKKYILAIDQGTTSSRAILFDHKGRIIGMAQREFTQIFPQPGWVEHNPRDIMTSVYTTITELLNNTQIDVRAIAGIGITNQRETTVIWDRQTGQPIYNAIVWQSRQTKDICDQLTTAGYQDMVHAKTGLLIDAYFSGTKVKWILDHVENAHTQAARGELAFGTIDTWIIWNLTGGQVHVTDYSNASRTLLYDIHALRWDPDLLTMLDIPAAILPDVRSSSEIYGLTQTPYFHGEQIPIAGIAGDQQAALFGQACFEPGMAKNTYGTGCFMLMHTGKKAVESQNGLLTTIAWGLNGEIEYALEGSIFIAGSVVQWLRDGLRMFGKASDSQAYADRVSDNGGVYVVPAFVGLGAPYWRSDVRGAVFGLTRSTTKEHFVRAALESMAYQTRDVLSAMQADADIELKELRTDGAAITNDFMAQFQSDILAVPVLRSQIAETTALGAAYLAGLATGFWSSREEMTQHWAINRCFKPQMDKEQREHLYAGWKQAVEATLGFRVA</sequence>
<protein>
    <recommendedName>
        <fullName evidence="1">Glycerol kinase</fullName>
        <ecNumber evidence="1">2.7.1.30</ecNumber>
    </recommendedName>
    <alternativeName>
        <fullName evidence="1">ATP:glycerol 3-phosphotransferase</fullName>
    </alternativeName>
    <alternativeName>
        <fullName evidence="1">Glycerokinase</fullName>
        <shortName evidence="1">GK</shortName>
    </alternativeName>
</protein>
<evidence type="ECO:0000255" key="1">
    <source>
        <dbReference type="HAMAP-Rule" id="MF_00186"/>
    </source>
</evidence>
<dbReference type="EC" id="2.7.1.30" evidence="1"/>
<dbReference type="EMBL" id="AE009442">
    <property type="protein sequence ID" value="AAO29153.1"/>
    <property type="molecule type" value="Genomic_DNA"/>
</dbReference>
<dbReference type="RefSeq" id="WP_004088276.1">
    <property type="nucleotide sequence ID" value="NC_004556.1"/>
</dbReference>
<dbReference type="SMR" id="Q87BZ2"/>
<dbReference type="GeneID" id="93905119"/>
<dbReference type="KEGG" id="xft:PD_1304"/>
<dbReference type="HOGENOM" id="CLU_009281_2_3_6"/>
<dbReference type="UniPathway" id="UPA00618">
    <property type="reaction ID" value="UER00672"/>
</dbReference>
<dbReference type="Proteomes" id="UP000002516">
    <property type="component" value="Chromosome"/>
</dbReference>
<dbReference type="GO" id="GO:0005829">
    <property type="term" value="C:cytosol"/>
    <property type="evidence" value="ECO:0007669"/>
    <property type="project" value="TreeGrafter"/>
</dbReference>
<dbReference type="GO" id="GO:0005524">
    <property type="term" value="F:ATP binding"/>
    <property type="evidence" value="ECO:0007669"/>
    <property type="project" value="UniProtKB-UniRule"/>
</dbReference>
<dbReference type="GO" id="GO:0004370">
    <property type="term" value="F:glycerol kinase activity"/>
    <property type="evidence" value="ECO:0000250"/>
    <property type="project" value="UniProtKB"/>
</dbReference>
<dbReference type="GO" id="GO:0019563">
    <property type="term" value="P:glycerol catabolic process"/>
    <property type="evidence" value="ECO:0007669"/>
    <property type="project" value="UniProtKB-UniRule"/>
</dbReference>
<dbReference type="GO" id="GO:0006071">
    <property type="term" value="P:glycerol metabolic process"/>
    <property type="evidence" value="ECO:0000250"/>
    <property type="project" value="UniProtKB"/>
</dbReference>
<dbReference type="GO" id="GO:0006072">
    <property type="term" value="P:glycerol-3-phosphate metabolic process"/>
    <property type="evidence" value="ECO:0007669"/>
    <property type="project" value="InterPro"/>
</dbReference>
<dbReference type="CDD" id="cd07786">
    <property type="entry name" value="FGGY_EcGK_like"/>
    <property type="match status" value="1"/>
</dbReference>
<dbReference type="FunFam" id="3.30.420.40:FF:000007">
    <property type="entry name" value="Glycerol kinase"/>
    <property type="match status" value="1"/>
</dbReference>
<dbReference type="FunFam" id="3.30.420.40:FF:000008">
    <property type="entry name" value="Glycerol kinase"/>
    <property type="match status" value="1"/>
</dbReference>
<dbReference type="Gene3D" id="3.30.420.40">
    <property type="match status" value="2"/>
</dbReference>
<dbReference type="HAMAP" id="MF_00186">
    <property type="entry name" value="Glycerol_kin"/>
    <property type="match status" value="1"/>
</dbReference>
<dbReference type="InterPro" id="IPR043129">
    <property type="entry name" value="ATPase_NBD"/>
</dbReference>
<dbReference type="InterPro" id="IPR000577">
    <property type="entry name" value="Carb_kinase_FGGY"/>
</dbReference>
<dbReference type="InterPro" id="IPR018483">
    <property type="entry name" value="Carb_kinase_FGGY_CS"/>
</dbReference>
<dbReference type="InterPro" id="IPR018485">
    <property type="entry name" value="FGGY_C"/>
</dbReference>
<dbReference type="InterPro" id="IPR018484">
    <property type="entry name" value="FGGY_N"/>
</dbReference>
<dbReference type="InterPro" id="IPR005999">
    <property type="entry name" value="Glycerol_kin"/>
</dbReference>
<dbReference type="NCBIfam" id="TIGR01311">
    <property type="entry name" value="glycerol_kin"/>
    <property type="match status" value="1"/>
</dbReference>
<dbReference type="NCBIfam" id="NF000756">
    <property type="entry name" value="PRK00047.1"/>
    <property type="match status" value="1"/>
</dbReference>
<dbReference type="PANTHER" id="PTHR10196:SF69">
    <property type="entry name" value="GLYCEROL KINASE"/>
    <property type="match status" value="1"/>
</dbReference>
<dbReference type="PANTHER" id="PTHR10196">
    <property type="entry name" value="SUGAR KINASE"/>
    <property type="match status" value="1"/>
</dbReference>
<dbReference type="Pfam" id="PF02782">
    <property type="entry name" value="FGGY_C"/>
    <property type="match status" value="1"/>
</dbReference>
<dbReference type="Pfam" id="PF00370">
    <property type="entry name" value="FGGY_N"/>
    <property type="match status" value="1"/>
</dbReference>
<dbReference type="PIRSF" id="PIRSF000538">
    <property type="entry name" value="GlpK"/>
    <property type="match status" value="1"/>
</dbReference>
<dbReference type="SUPFAM" id="SSF53067">
    <property type="entry name" value="Actin-like ATPase domain"/>
    <property type="match status" value="2"/>
</dbReference>
<dbReference type="PROSITE" id="PS00933">
    <property type="entry name" value="FGGY_KINASES_1"/>
    <property type="match status" value="1"/>
</dbReference>
<dbReference type="PROSITE" id="PS00445">
    <property type="entry name" value="FGGY_KINASES_2"/>
    <property type="match status" value="1"/>
</dbReference>
<organism>
    <name type="scientific">Xylella fastidiosa (strain Temecula1 / ATCC 700964)</name>
    <dbReference type="NCBI Taxonomy" id="183190"/>
    <lineage>
        <taxon>Bacteria</taxon>
        <taxon>Pseudomonadati</taxon>
        <taxon>Pseudomonadota</taxon>
        <taxon>Gammaproteobacteria</taxon>
        <taxon>Lysobacterales</taxon>
        <taxon>Lysobacteraceae</taxon>
        <taxon>Xylella</taxon>
    </lineage>
</organism>